<name>HFQ_FRATW</name>
<proteinExistence type="inferred from homology"/>
<accession>A4IYB0</accession>
<gene>
    <name evidence="1" type="primary">hfq</name>
    <name type="ordered locus">FTW_1099</name>
</gene>
<protein>
    <recommendedName>
        <fullName evidence="1">RNA-binding protein Hfq</fullName>
    </recommendedName>
</protein>
<keyword id="KW-0694">RNA-binding</keyword>
<keyword id="KW-0346">Stress response</keyword>
<organism>
    <name type="scientific">Francisella tularensis subsp. tularensis (strain WY96-3418)</name>
    <dbReference type="NCBI Taxonomy" id="418136"/>
    <lineage>
        <taxon>Bacteria</taxon>
        <taxon>Pseudomonadati</taxon>
        <taxon>Pseudomonadota</taxon>
        <taxon>Gammaproteobacteria</taxon>
        <taxon>Thiotrichales</taxon>
        <taxon>Francisellaceae</taxon>
        <taxon>Francisella</taxon>
    </lineage>
</organism>
<dbReference type="EMBL" id="CP000608">
    <property type="protein sequence ID" value="ABO46911.1"/>
    <property type="molecule type" value="Genomic_DNA"/>
</dbReference>
<dbReference type="RefSeq" id="WP_003015654.1">
    <property type="nucleotide sequence ID" value="NC_009257.1"/>
</dbReference>
<dbReference type="SMR" id="A4IYB0"/>
<dbReference type="GeneID" id="75265215"/>
<dbReference type="KEGG" id="ftw:FTW_1099"/>
<dbReference type="HOGENOM" id="CLU_113688_2_2_6"/>
<dbReference type="GO" id="GO:0005829">
    <property type="term" value="C:cytosol"/>
    <property type="evidence" value="ECO:0007669"/>
    <property type="project" value="TreeGrafter"/>
</dbReference>
<dbReference type="GO" id="GO:0003723">
    <property type="term" value="F:RNA binding"/>
    <property type="evidence" value="ECO:0007669"/>
    <property type="project" value="UniProtKB-UniRule"/>
</dbReference>
<dbReference type="GO" id="GO:0006355">
    <property type="term" value="P:regulation of DNA-templated transcription"/>
    <property type="evidence" value="ECO:0007669"/>
    <property type="project" value="InterPro"/>
</dbReference>
<dbReference type="GO" id="GO:0043487">
    <property type="term" value="P:regulation of RNA stability"/>
    <property type="evidence" value="ECO:0007669"/>
    <property type="project" value="TreeGrafter"/>
</dbReference>
<dbReference type="GO" id="GO:0045974">
    <property type="term" value="P:regulation of translation, ncRNA-mediated"/>
    <property type="evidence" value="ECO:0007669"/>
    <property type="project" value="TreeGrafter"/>
</dbReference>
<dbReference type="CDD" id="cd01716">
    <property type="entry name" value="Hfq"/>
    <property type="match status" value="1"/>
</dbReference>
<dbReference type="FunFam" id="2.30.30.100:FF:000001">
    <property type="entry name" value="RNA-binding protein Hfq"/>
    <property type="match status" value="1"/>
</dbReference>
<dbReference type="Gene3D" id="2.30.30.100">
    <property type="match status" value="1"/>
</dbReference>
<dbReference type="HAMAP" id="MF_00436">
    <property type="entry name" value="Hfq"/>
    <property type="match status" value="1"/>
</dbReference>
<dbReference type="InterPro" id="IPR005001">
    <property type="entry name" value="Hfq"/>
</dbReference>
<dbReference type="InterPro" id="IPR010920">
    <property type="entry name" value="LSM_dom_sf"/>
</dbReference>
<dbReference type="InterPro" id="IPR047575">
    <property type="entry name" value="Sm"/>
</dbReference>
<dbReference type="NCBIfam" id="TIGR02383">
    <property type="entry name" value="Hfq"/>
    <property type="match status" value="1"/>
</dbReference>
<dbReference type="NCBIfam" id="NF001602">
    <property type="entry name" value="PRK00395.1"/>
    <property type="match status" value="1"/>
</dbReference>
<dbReference type="PANTHER" id="PTHR34772">
    <property type="entry name" value="RNA-BINDING PROTEIN HFQ"/>
    <property type="match status" value="1"/>
</dbReference>
<dbReference type="PANTHER" id="PTHR34772:SF1">
    <property type="entry name" value="RNA-BINDING PROTEIN HFQ"/>
    <property type="match status" value="1"/>
</dbReference>
<dbReference type="Pfam" id="PF17209">
    <property type="entry name" value="Hfq"/>
    <property type="match status" value="1"/>
</dbReference>
<dbReference type="SUPFAM" id="SSF50182">
    <property type="entry name" value="Sm-like ribonucleoproteins"/>
    <property type="match status" value="1"/>
</dbReference>
<dbReference type="PROSITE" id="PS52002">
    <property type="entry name" value="SM"/>
    <property type="match status" value="1"/>
</dbReference>
<comment type="function">
    <text evidence="1">RNA chaperone that binds small regulatory RNA (sRNAs) and mRNAs to facilitate mRNA translational regulation in response to envelope stress, environmental stress and changes in metabolite concentrations. Also binds with high specificity to tRNAs.</text>
</comment>
<comment type="subunit">
    <text evidence="1">Homohexamer.</text>
</comment>
<comment type="similarity">
    <text evidence="1">Belongs to the Hfq family.</text>
</comment>
<evidence type="ECO:0000255" key="1">
    <source>
        <dbReference type="HAMAP-Rule" id="MF_00436"/>
    </source>
</evidence>
<evidence type="ECO:0000255" key="2">
    <source>
        <dbReference type="PROSITE-ProRule" id="PRU01346"/>
    </source>
</evidence>
<evidence type="ECO:0000256" key="3">
    <source>
        <dbReference type="SAM" id="MobiDB-lite"/>
    </source>
</evidence>
<sequence length="109" mass="12484">MSRISSLQDPFLNALRKEKVSVSVYLVNGIKLQGQVEAFDQFCIVLRNTVNQMVYKHAISTIVPAKSVRMVYSSFNPYHQNSNDEQDENVDDIHSDDLEIQENEGNIHE</sequence>
<feature type="chain" id="PRO_1000025910" description="RNA-binding protein Hfq">
    <location>
        <begin position="1"/>
        <end position="109"/>
    </location>
</feature>
<feature type="domain" description="Sm" evidence="2">
    <location>
        <begin position="9"/>
        <end position="68"/>
    </location>
</feature>
<feature type="region of interest" description="Disordered" evidence="3">
    <location>
        <begin position="77"/>
        <end position="109"/>
    </location>
</feature>
<reference key="1">
    <citation type="journal article" date="2007" name="PLoS ONE">
        <title>Complete genomic characterization of a pathogenic A.II strain of Francisella tularensis subspecies tularensis.</title>
        <authorList>
            <person name="Beckstrom-Sternberg S.M."/>
            <person name="Auerbach R.K."/>
            <person name="Godbole S."/>
            <person name="Pearson J.V."/>
            <person name="Beckstrom-Sternberg J.S."/>
            <person name="Deng Z."/>
            <person name="Munk C."/>
            <person name="Kubota K."/>
            <person name="Zhou Y."/>
            <person name="Bruce D."/>
            <person name="Noronha J."/>
            <person name="Scheuermann R.H."/>
            <person name="Wang A."/>
            <person name="Wei X."/>
            <person name="Wang J."/>
            <person name="Hao J."/>
            <person name="Wagner D.M."/>
            <person name="Brettin T.S."/>
            <person name="Brown N."/>
            <person name="Gilna P."/>
            <person name="Keim P.S."/>
        </authorList>
    </citation>
    <scope>NUCLEOTIDE SEQUENCE [LARGE SCALE GENOMIC DNA]</scope>
    <source>
        <strain>WY96-3418</strain>
    </source>
</reference>